<reference key="1">
    <citation type="journal article" date="2000" name="Science">
        <title>The genome sequence of Drosophila melanogaster.</title>
        <authorList>
            <person name="Adams M.D."/>
            <person name="Celniker S.E."/>
            <person name="Holt R.A."/>
            <person name="Evans C.A."/>
            <person name="Gocayne J.D."/>
            <person name="Amanatides P.G."/>
            <person name="Scherer S.E."/>
            <person name="Li P.W."/>
            <person name="Hoskins R.A."/>
            <person name="Galle R.F."/>
            <person name="George R.A."/>
            <person name="Lewis S.E."/>
            <person name="Richards S."/>
            <person name="Ashburner M."/>
            <person name="Henderson S.N."/>
            <person name="Sutton G.G."/>
            <person name="Wortman J.R."/>
            <person name="Yandell M.D."/>
            <person name="Zhang Q."/>
            <person name="Chen L.X."/>
            <person name="Brandon R.C."/>
            <person name="Rogers Y.-H.C."/>
            <person name="Blazej R.G."/>
            <person name="Champe M."/>
            <person name="Pfeiffer B.D."/>
            <person name="Wan K.H."/>
            <person name="Doyle C."/>
            <person name="Baxter E.G."/>
            <person name="Helt G."/>
            <person name="Nelson C.R."/>
            <person name="Miklos G.L.G."/>
            <person name="Abril J.F."/>
            <person name="Agbayani A."/>
            <person name="An H.-J."/>
            <person name="Andrews-Pfannkoch C."/>
            <person name="Baldwin D."/>
            <person name="Ballew R.M."/>
            <person name="Basu A."/>
            <person name="Baxendale J."/>
            <person name="Bayraktaroglu L."/>
            <person name="Beasley E.M."/>
            <person name="Beeson K.Y."/>
            <person name="Benos P.V."/>
            <person name="Berman B.P."/>
            <person name="Bhandari D."/>
            <person name="Bolshakov S."/>
            <person name="Borkova D."/>
            <person name="Botchan M.R."/>
            <person name="Bouck J."/>
            <person name="Brokstein P."/>
            <person name="Brottier P."/>
            <person name="Burtis K.C."/>
            <person name="Busam D.A."/>
            <person name="Butler H."/>
            <person name="Cadieu E."/>
            <person name="Center A."/>
            <person name="Chandra I."/>
            <person name="Cherry J.M."/>
            <person name="Cawley S."/>
            <person name="Dahlke C."/>
            <person name="Davenport L.B."/>
            <person name="Davies P."/>
            <person name="de Pablos B."/>
            <person name="Delcher A."/>
            <person name="Deng Z."/>
            <person name="Mays A.D."/>
            <person name="Dew I."/>
            <person name="Dietz S.M."/>
            <person name="Dodson K."/>
            <person name="Doup L.E."/>
            <person name="Downes M."/>
            <person name="Dugan-Rocha S."/>
            <person name="Dunkov B.C."/>
            <person name="Dunn P."/>
            <person name="Durbin K.J."/>
            <person name="Evangelista C.C."/>
            <person name="Ferraz C."/>
            <person name="Ferriera S."/>
            <person name="Fleischmann W."/>
            <person name="Fosler C."/>
            <person name="Gabrielian A.E."/>
            <person name="Garg N.S."/>
            <person name="Gelbart W.M."/>
            <person name="Glasser K."/>
            <person name="Glodek A."/>
            <person name="Gong F."/>
            <person name="Gorrell J.H."/>
            <person name="Gu Z."/>
            <person name="Guan P."/>
            <person name="Harris M."/>
            <person name="Harris N.L."/>
            <person name="Harvey D.A."/>
            <person name="Heiman T.J."/>
            <person name="Hernandez J.R."/>
            <person name="Houck J."/>
            <person name="Hostin D."/>
            <person name="Houston K.A."/>
            <person name="Howland T.J."/>
            <person name="Wei M.-H."/>
            <person name="Ibegwam C."/>
            <person name="Jalali M."/>
            <person name="Kalush F."/>
            <person name="Karpen G.H."/>
            <person name="Ke Z."/>
            <person name="Kennison J.A."/>
            <person name="Ketchum K.A."/>
            <person name="Kimmel B.E."/>
            <person name="Kodira C.D."/>
            <person name="Kraft C.L."/>
            <person name="Kravitz S."/>
            <person name="Kulp D."/>
            <person name="Lai Z."/>
            <person name="Lasko P."/>
            <person name="Lei Y."/>
            <person name="Levitsky A.A."/>
            <person name="Li J.H."/>
            <person name="Li Z."/>
            <person name="Liang Y."/>
            <person name="Lin X."/>
            <person name="Liu X."/>
            <person name="Mattei B."/>
            <person name="McIntosh T.C."/>
            <person name="McLeod M.P."/>
            <person name="McPherson D."/>
            <person name="Merkulov G."/>
            <person name="Milshina N.V."/>
            <person name="Mobarry C."/>
            <person name="Morris J."/>
            <person name="Moshrefi A."/>
            <person name="Mount S.M."/>
            <person name="Moy M."/>
            <person name="Murphy B."/>
            <person name="Murphy L."/>
            <person name="Muzny D.M."/>
            <person name="Nelson D.L."/>
            <person name="Nelson D.R."/>
            <person name="Nelson K.A."/>
            <person name="Nixon K."/>
            <person name="Nusskern D.R."/>
            <person name="Pacleb J.M."/>
            <person name="Palazzolo M."/>
            <person name="Pittman G.S."/>
            <person name="Pan S."/>
            <person name="Pollard J."/>
            <person name="Puri V."/>
            <person name="Reese M.G."/>
            <person name="Reinert K."/>
            <person name="Remington K."/>
            <person name="Saunders R.D.C."/>
            <person name="Scheeler F."/>
            <person name="Shen H."/>
            <person name="Shue B.C."/>
            <person name="Siden-Kiamos I."/>
            <person name="Simpson M."/>
            <person name="Skupski M.P."/>
            <person name="Smith T.J."/>
            <person name="Spier E."/>
            <person name="Spradling A.C."/>
            <person name="Stapleton M."/>
            <person name="Strong R."/>
            <person name="Sun E."/>
            <person name="Svirskas R."/>
            <person name="Tector C."/>
            <person name="Turner R."/>
            <person name="Venter E."/>
            <person name="Wang A.H."/>
            <person name="Wang X."/>
            <person name="Wang Z.-Y."/>
            <person name="Wassarman D.A."/>
            <person name="Weinstock G.M."/>
            <person name="Weissenbach J."/>
            <person name="Williams S.M."/>
            <person name="Woodage T."/>
            <person name="Worley K.C."/>
            <person name="Wu D."/>
            <person name="Yang S."/>
            <person name="Yao Q.A."/>
            <person name="Ye J."/>
            <person name="Yeh R.-F."/>
            <person name="Zaveri J.S."/>
            <person name="Zhan M."/>
            <person name="Zhang G."/>
            <person name="Zhao Q."/>
            <person name="Zheng L."/>
            <person name="Zheng X.H."/>
            <person name="Zhong F.N."/>
            <person name="Zhong W."/>
            <person name="Zhou X."/>
            <person name="Zhu S.C."/>
            <person name="Zhu X."/>
            <person name="Smith H.O."/>
            <person name="Gibbs R.A."/>
            <person name="Myers E.W."/>
            <person name="Rubin G.M."/>
            <person name="Venter J.C."/>
        </authorList>
    </citation>
    <scope>NUCLEOTIDE SEQUENCE [LARGE SCALE GENOMIC DNA]</scope>
    <source>
        <strain>Berkeley</strain>
    </source>
</reference>
<reference key="2">
    <citation type="journal article" date="2002" name="Genome Biol.">
        <title>Annotation of the Drosophila melanogaster euchromatic genome: a systematic review.</title>
        <authorList>
            <person name="Misra S."/>
            <person name="Crosby M.A."/>
            <person name="Mungall C.J."/>
            <person name="Matthews B.B."/>
            <person name="Campbell K.S."/>
            <person name="Hradecky P."/>
            <person name="Huang Y."/>
            <person name="Kaminker J.S."/>
            <person name="Millburn G.H."/>
            <person name="Prochnik S.E."/>
            <person name="Smith C.D."/>
            <person name="Tupy J.L."/>
            <person name="Whitfield E.J."/>
            <person name="Bayraktaroglu L."/>
            <person name="Berman B.P."/>
            <person name="Bettencourt B.R."/>
            <person name="Celniker S.E."/>
            <person name="de Grey A.D.N.J."/>
            <person name="Drysdale R.A."/>
            <person name="Harris N.L."/>
            <person name="Richter J."/>
            <person name="Russo S."/>
            <person name="Schroeder A.J."/>
            <person name="Shu S.Q."/>
            <person name="Stapleton M."/>
            <person name="Yamada C."/>
            <person name="Ashburner M."/>
            <person name="Gelbart W.M."/>
            <person name="Rubin G.M."/>
            <person name="Lewis S.E."/>
        </authorList>
    </citation>
    <scope>GENOME REANNOTATION</scope>
    <source>
        <strain>Berkeley</strain>
    </source>
</reference>
<reference key="3">
    <citation type="submission" date="2009-07" db="EMBL/GenBank/DDBJ databases">
        <authorList>
            <person name="Carlson J.W."/>
            <person name="Booth B."/>
            <person name="Frise E."/>
            <person name="Park S."/>
            <person name="Wan K.H."/>
            <person name="Yu C."/>
            <person name="Celniker S.E."/>
        </authorList>
    </citation>
    <scope>NUCLEOTIDE SEQUENCE [LARGE SCALE MRNA]</scope>
    <source>
        <strain>Berkeley</strain>
        <tissue>Embryo</tissue>
    </source>
</reference>
<name>PFD2_DROME</name>
<feature type="chain" id="PRO_0000124838" description="Probable prefoldin subunit 2">
    <location>
        <begin position="1"/>
        <end position="143"/>
    </location>
</feature>
<dbReference type="EMBL" id="AE014296">
    <property type="protein sequence ID" value="AAF50107.1"/>
    <property type="molecule type" value="Genomic_DNA"/>
</dbReference>
<dbReference type="EMBL" id="BT089005">
    <property type="protein sequence ID" value="ACT88146.1"/>
    <property type="molecule type" value="mRNA"/>
</dbReference>
<dbReference type="RefSeq" id="NP_001261696.1">
    <property type="nucleotide sequence ID" value="NM_001274767.1"/>
</dbReference>
<dbReference type="RefSeq" id="NP_729659.1">
    <property type="nucleotide sequence ID" value="NM_168438.2"/>
</dbReference>
<dbReference type="SMR" id="Q9VTE5"/>
<dbReference type="BioGRID" id="70104">
    <property type="interactions" value="17"/>
</dbReference>
<dbReference type="ComplexPortal" id="CPX-2389">
    <property type="entry name" value="Prefoldin co-chaperone complex"/>
</dbReference>
<dbReference type="DIP" id="DIP-22191N"/>
<dbReference type="FunCoup" id="Q9VTE5">
    <property type="interactions" value="1432"/>
</dbReference>
<dbReference type="IntAct" id="Q9VTE5">
    <property type="interactions" value="19"/>
</dbReference>
<dbReference type="STRING" id="7227.FBpp0304954"/>
<dbReference type="PaxDb" id="7227-FBpp0304954"/>
<dbReference type="DNASU" id="46121"/>
<dbReference type="EnsemblMetazoa" id="FBtr0076238">
    <property type="protein sequence ID" value="FBpp0075967"/>
    <property type="gene ID" value="FBgn0010741"/>
</dbReference>
<dbReference type="EnsemblMetazoa" id="FBtr0332708">
    <property type="protein sequence ID" value="FBpp0304954"/>
    <property type="gene ID" value="FBgn0010741"/>
</dbReference>
<dbReference type="GeneID" id="46121"/>
<dbReference type="KEGG" id="dme:Dmel_CG6302"/>
<dbReference type="AGR" id="FB:FBgn0010741"/>
<dbReference type="CTD" id="5202"/>
<dbReference type="FlyBase" id="FBgn0010741">
    <property type="gene designation" value="Pfdn2"/>
</dbReference>
<dbReference type="VEuPathDB" id="VectorBase:FBgn0010741"/>
<dbReference type="eggNOG" id="KOG4098">
    <property type="taxonomic scope" value="Eukaryota"/>
</dbReference>
<dbReference type="GeneTree" id="ENSGT00390000009272"/>
<dbReference type="HOGENOM" id="CLU_113004_0_0_1"/>
<dbReference type="InParanoid" id="Q9VTE5"/>
<dbReference type="OMA" id="CFKMIGG"/>
<dbReference type="OrthoDB" id="29646at2759"/>
<dbReference type="PhylomeDB" id="Q9VTE5"/>
<dbReference type="BioGRID-ORCS" id="46121">
    <property type="hits" value="1 hit in 1 CRISPR screen"/>
</dbReference>
<dbReference type="GenomeRNAi" id="46121"/>
<dbReference type="PRO" id="PR:Q9VTE5"/>
<dbReference type="Proteomes" id="UP000000803">
    <property type="component" value="Chromosome 3L"/>
</dbReference>
<dbReference type="Bgee" id="FBgn0010741">
    <property type="expression patterns" value="Expressed in eye disc (Drosophila) and 194 other cell types or tissues"/>
</dbReference>
<dbReference type="ExpressionAtlas" id="Q9VTE5">
    <property type="expression patterns" value="baseline and differential"/>
</dbReference>
<dbReference type="GO" id="GO:0005737">
    <property type="term" value="C:cytoplasm"/>
    <property type="evidence" value="ECO:0000318"/>
    <property type="project" value="GO_Central"/>
</dbReference>
<dbReference type="GO" id="GO:0016272">
    <property type="term" value="C:prefoldin complex"/>
    <property type="evidence" value="ECO:0000314"/>
    <property type="project" value="FlyBase"/>
</dbReference>
<dbReference type="GO" id="GO:0044183">
    <property type="term" value="F:protein folding chaperone"/>
    <property type="evidence" value="ECO:0000318"/>
    <property type="project" value="GO_Central"/>
</dbReference>
<dbReference type="GO" id="GO:0051082">
    <property type="term" value="F:unfolded protein binding"/>
    <property type="evidence" value="ECO:0007669"/>
    <property type="project" value="InterPro"/>
</dbReference>
<dbReference type="GO" id="GO:0045196">
    <property type="term" value="P:establishment or maintenance of neuroblast polarity"/>
    <property type="evidence" value="ECO:0000315"/>
    <property type="project" value="FlyBase"/>
</dbReference>
<dbReference type="GO" id="GO:0006457">
    <property type="term" value="P:protein folding"/>
    <property type="evidence" value="ECO:0000318"/>
    <property type="project" value="GO_Central"/>
</dbReference>
<dbReference type="CDD" id="cd23163">
    <property type="entry name" value="Prefoldin_2"/>
    <property type="match status" value="1"/>
</dbReference>
<dbReference type="FunFam" id="1.10.287.370:FF:000002">
    <property type="entry name" value="Prefoldin subunit 2"/>
    <property type="match status" value="1"/>
</dbReference>
<dbReference type="Gene3D" id="1.10.287.370">
    <property type="match status" value="1"/>
</dbReference>
<dbReference type="InterPro" id="IPR027235">
    <property type="entry name" value="PFD2"/>
</dbReference>
<dbReference type="InterPro" id="IPR002777">
    <property type="entry name" value="PFD_beta-like"/>
</dbReference>
<dbReference type="InterPro" id="IPR009053">
    <property type="entry name" value="Prefoldin"/>
</dbReference>
<dbReference type="PANTHER" id="PTHR13303">
    <property type="entry name" value="PREFOLDIN SUBUNIT 2"/>
    <property type="match status" value="1"/>
</dbReference>
<dbReference type="Pfam" id="PF01920">
    <property type="entry name" value="Prefoldin_2"/>
    <property type="match status" value="1"/>
</dbReference>
<dbReference type="SUPFAM" id="SSF46579">
    <property type="entry name" value="Prefoldin"/>
    <property type="match status" value="1"/>
</dbReference>
<keyword id="KW-0143">Chaperone</keyword>
<keyword id="KW-1185">Reference proteome</keyword>
<evidence type="ECO:0000250" key="1"/>
<evidence type="ECO:0000305" key="2"/>
<evidence type="ECO:0000312" key="3">
    <source>
        <dbReference type="FlyBase" id="FBgn0010741"/>
    </source>
</evidence>
<gene>
    <name evidence="3" type="primary">Pfdn2</name>
    <name evidence="3" type="synonym">l(3)01239</name>
    <name evidence="3" type="ORF">CG6302</name>
</gene>
<comment type="function">
    <text evidence="1">Binds specifically to cytosolic chaperonin (c-CPN) and transfers target proteins to it. Binds to nascent polypeptide chain and promotes folding in an environment in which there are many competing pathways for nonnative proteins (By similarity).</text>
</comment>
<comment type="subunit">
    <text evidence="1">Heterohexamer of two PFD-alpha type and four PFD-beta type subunits.</text>
</comment>
<comment type="interaction">
    <interactant intactId="EBI-112583">
        <id>Q9VTE5</id>
    </interactant>
    <interactant intactId="EBI-130766">
        <id>Q8T965</id>
        <label>Dmel\CG15676</label>
    </interactant>
    <organismsDiffer>false</organismsDiffer>
    <experiments>3</experiments>
</comment>
<comment type="interaction">
    <interactant intactId="EBI-112583">
        <id>Q9VTE5</id>
    </interactant>
    <interactant intactId="EBI-186707">
        <id>Q9VGP6</id>
        <label>mgr</label>
    </interactant>
    <organismsDiffer>false</organismsDiffer>
    <experiments>3</experiments>
</comment>
<comment type="interaction">
    <interactant intactId="EBI-112583">
        <id>Q9VTE5</id>
    </interactant>
    <interactant intactId="EBI-155324">
        <id>Q9VJP9</id>
        <label>Uxt</label>
    </interactant>
    <organismsDiffer>false</organismsDiffer>
    <experiments>5</experiments>
</comment>
<comment type="similarity">
    <text evidence="2">Belongs to the prefoldin subunit beta family.</text>
</comment>
<organism>
    <name type="scientific">Drosophila melanogaster</name>
    <name type="common">Fruit fly</name>
    <dbReference type="NCBI Taxonomy" id="7227"/>
    <lineage>
        <taxon>Eukaryota</taxon>
        <taxon>Metazoa</taxon>
        <taxon>Ecdysozoa</taxon>
        <taxon>Arthropoda</taxon>
        <taxon>Hexapoda</taxon>
        <taxon>Insecta</taxon>
        <taxon>Pterygota</taxon>
        <taxon>Neoptera</taxon>
        <taxon>Endopterygota</taxon>
        <taxon>Diptera</taxon>
        <taxon>Brachycera</taxon>
        <taxon>Muscomorpha</taxon>
        <taxon>Ephydroidea</taxon>
        <taxon>Drosophilidae</taxon>
        <taxon>Drosophila</taxon>
        <taxon>Sophophora</taxon>
    </lineage>
</organism>
<sequence>MSTESAKPALSQEAIVAQFQQLRNEQRNLVNSLNTLEMDLREHKTVIETLEAADPERKCFRQIGGVLCERTVKEVLPQLVENKDFIAKTIQMVTNDLSKKGSELNKFKEEHNIKIRGEHLVAEGAKGDDAEDKAENRNVLVFN</sequence>
<protein>
    <recommendedName>
        <fullName evidence="3">Probable prefoldin subunit 2</fullName>
    </recommendedName>
</protein>
<accession>Q9VTE5</accession>
<accession>C6SV13</accession>
<proteinExistence type="evidence at protein level"/>